<feature type="chain" id="PRO_1000206120" description="Transcriptional repressor NrdR">
    <location>
        <begin position="1"/>
        <end position="157"/>
    </location>
</feature>
<feature type="domain" description="ATP-cone" evidence="1">
    <location>
        <begin position="49"/>
        <end position="139"/>
    </location>
</feature>
<feature type="zinc finger region" evidence="1">
    <location>
        <begin position="3"/>
        <end position="34"/>
    </location>
</feature>
<proteinExistence type="inferred from homology"/>
<evidence type="ECO:0000255" key="1">
    <source>
        <dbReference type="HAMAP-Rule" id="MF_00440"/>
    </source>
</evidence>
<organism>
    <name type="scientific">Hamiltonella defensa subsp. Acyrthosiphon pisum (strain 5AT)</name>
    <dbReference type="NCBI Taxonomy" id="572265"/>
    <lineage>
        <taxon>Bacteria</taxon>
        <taxon>Pseudomonadati</taxon>
        <taxon>Pseudomonadota</taxon>
        <taxon>Gammaproteobacteria</taxon>
        <taxon>Enterobacterales</taxon>
        <taxon>Enterobacteriaceae</taxon>
        <taxon>aphid secondary symbionts</taxon>
        <taxon>Candidatus Hamiltonella</taxon>
    </lineage>
</organism>
<reference key="1">
    <citation type="journal article" date="2009" name="Proc. Natl. Acad. Sci. U.S.A.">
        <title>Hamiltonella defensa, genome evolution of protective bacterial endosymbiont from pathogenic ancestors.</title>
        <authorList>
            <person name="Degnan P.H."/>
            <person name="Yu Y."/>
            <person name="Sisneros N."/>
            <person name="Wing R.A."/>
            <person name="Moran N.A."/>
        </authorList>
    </citation>
    <scope>NUCLEOTIDE SEQUENCE [LARGE SCALE GENOMIC DNA]</scope>
    <source>
        <strain>5AT</strain>
    </source>
</reference>
<gene>
    <name evidence="1" type="primary">nrdR</name>
    <name type="ordered locus">HDEF_0031</name>
</gene>
<keyword id="KW-0067">ATP-binding</keyword>
<keyword id="KW-0238">DNA-binding</keyword>
<keyword id="KW-0479">Metal-binding</keyword>
<keyword id="KW-0547">Nucleotide-binding</keyword>
<keyword id="KW-0678">Repressor</keyword>
<keyword id="KW-0804">Transcription</keyword>
<keyword id="KW-0805">Transcription regulation</keyword>
<keyword id="KW-0862">Zinc</keyword>
<keyword id="KW-0863">Zinc-finger</keyword>
<comment type="function">
    <text evidence="1">Negatively regulates transcription of bacterial ribonucleotide reductase nrd genes and operons by binding to NrdR-boxes.</text>
</comment>
<comment type="cofactor">
    <cofactor evidence="1">
        <name>Zn(2+)</name>
        <dbReference type="ChEBI" id="CHEBI:29105"/>
    </cofactor>
    <text evidence="1">Binds 1 zinc ion.</text>
</comment>
<comment type="similarity">
    <text evidence="1">Belongs to the NrdR family.</text>
</comment>
<sequence>MHCPFCNTVDTKVIDSRLVSEGSQIKRRRQCAICHERFTTLEHAELVMPRVIKNDDLLEPFNEQKLRSGMRKALEKRPVSTDALETAIHQIKSQLRATGEPEVPSKMLGQFVMEALKKLDKIAYIRFASVYRSFEDVREFGEEIAKLQDNPSLHQKD</sequence>
<dbReference type="EMBL" id="CP001277">
    <property type="protein sequence ID" value="ACQ66806.1"/>
    <property type="molecule type" value="Genomic_DNA"/>
</dbReference>
<dbReference type="RefSeq" id="WP_012737771.1">
    <property type="nucleotide sequence ID" value="NC_012751.1"/>
</dbReference>
<dbReference type="SMR" id="C4K846"/>
<dbReference type="STRING" id="572265.HDEF_0031"/>
<dbReference type="GeneID" id="66259975"/>
<dbReference type="KEGG" id="hde:HDEF_0031"/>
<dbReference type="eggNOG" id="COG1327">
    <property type="taxonomic scope" value="Bacteria"/>
</dbReference>
<dbReference type="HOGENOM" id="CLU_108412_0_0_6"/>
<dbReference type="Proteomes" id="UP000002334">
    <property type="component" value="Chromosome"/>
</dbReference>
<dbReference type="GO" id="GO:0005524">
    <property type="term" value="F:ATP binding"/>
    <property type="evidence" value="ECO:0007669"/>
    <property type="project" value="UniProtKB-KW"/>
</dbReference>
<dbReference type="GO" id="GO:0003677">
    <property type="term" value="F:DNA binding"/>
    <property type="evidence" value="ECO:0007669"/>
    <property type="project" value="UniProtKB-KW"/>
</dbReference>
<dbReference type="GO" id="GO:0008270">
    <property type="term" value="F:zinc ion binding"/>
    <property type="evidence" value="ECO:0007669"/>
    <property type="project" value="UniProtKB-UniRule"/>
</dbReference>
<dbReference type="GO" id="GO:0045892">
    <property type="term" value="P:negative regulation of DNA-templated transcription"/>
    <property type="evidence" value="ECO:0007669"/>
    <property type="project" value="UniProtKB-UniRule"/>
</dbReference>
<dbReference type="HAMAP" id="MF_00440">
    <property type="entry name" value="NrdR"/>
    <property type="match status" value="1"/>
</dbReference>
<dbReference type="InterPro" id="IPR005144">
    <property type="entry name" value="ATP-cone_dom"/>
</dbReference>
<dbReference type="InterPro" id="IPR055173">
    <property type="entry name" value="NrdR-like_N"/>
</dbReference>
<dbReference type="InterPro" id="IPR003796">
    <property type="entry name" value="RNR_NrdR-like"/>
</dbReference>
<dbReference type="NCBIfam" id="TIGR00244">
    <property type="entry name" value="transcriptional regulator NrdR"/>
    <property type="match status" value="1"/>
</dbReference>
<dbReference type="PANTHER" id="PTHR30455">
    <property type="entry name" value="TRANSCRIPTIONAL REPRESSOR NRDR"/>
    <property type="match status" value="1"/>
</dbReference>
<dbReference type="PANTHER" id="PTHR30455:SF2">
    <property type="entry name" value="TRANSCRIPTIONAL REPRESSOR NRDR"/>
    <property type="match status" value="1"/>
</dbReference>
<dbReference type="Pfam" id="PF03477">
    <property type="entry name" value="ATP-cone"/>
    <property type="match status" value="1"/>
</dbReference>
<dbReference type="Pfam" id="PF22811">
    <property type="entry name" value="Zn_ribbon_NrdR"/>
    <property type="match status" value="1"/>
</dbReference>
<dbReference type="PROSITE" id="PS51161">
    <property type="entry name" value="ATP_CONE"/>
    <property type="match status" value="1"/>
</dbReference>
<name>NRDR_HAMD5</name>
<accession>C4K846</accession>
<protein>
    <recommendedName>
        <fullName evidence="1">Transcriptional repressor NrdR</fullName>
    </recommendedName>
</protein>